<proteinExistence type="inferred from homology"/>
<comment type="subcellular location">
    <subcellularLocation>
        <location evidence="1">Cell inner membrane</location>
        <topology evidence="1">Multi-pass membrane protein</topology>
    </subcellularLocation>
</comment>
<comment type="similarity">
    <text evidence="1">Belongs to the UPF0761 family.</text>
</comment>
<sequence>MRQRFVDSLDFWRYLFERFLADQGPKSAAALTYTALFAVVPIMTLIFVVLSVVPDFQGIGEQIQGFIFRNFVPSSGAVLQDYLRTFIEQARHLTWLGVGVLMVTALLMLMTVEHTFNTIWRVRRPRRGLSSFLLHWAILSLGPLLLGTGFALSTYITSLSLVSDPYALAGARMLLKVMPLLFSTAAFTLLYVAVPNTAVPLRHALLGGLFAAVLFEAAKGLFGLYVALFPTYQLIYGAFAAVPLFLLWMYLSWMIVLLGAELVCNLSASRRWRRNPLPRLLVLLGVLRVFHQSQQSGQAVRQPDLQRAGWALPDSVWDEMLDFLEREQLICRVSDGGWVLCRDLNRYSLESLLSRSPWPLPHLDQLPESLDEPWFPALRSALERLQRERAALFGDSLANWLQPPLSEP</sequence>
<dbReference type="EMBL" id="CP001157">
    <property type="protein sequence ID" value="ACO79827.1"/>
    <property type="molecule type" value="Genomic_DNA"/>
</dbReference>
<dbReference type="RefSeq" id="WP_012702202.1">
    <property type="nucleotide sequence ID" value="NC_012560.1"/>
</dbReference>
<dbReference type="SMR" id="C1DRV2"/>
<dbReference type="STRING" id="322710.Avin_36810"/>
<dbReference type="EnsemblBacteria" id="ACO79827">
    <property type="protein sequence ID" value="ACO79827"/>
    <property type="gene ID" value="Avin_36810"/>
</dbReference>
<dbReference type="GeneID" id="88186664"/>
<dbReference type="KEGG" id="avn:Avin_36810"/>
<dbReference type="eggNOG" id="COG1295">
    <property type="taxonomic scope" value="Bacteria"/>
</dbReference>
<dbReference type="HOGENOM" id="CLU_032288_1_0_6"/>
<dbReference type="OrthoDB" id="9808671at2"/>
<dbReference type="Proteomes" id="UP000002424">
    <property type="component" value="Chromosome"/>
</dbReference>
<dbReference type="GO" id="GO:0005886">
    <property type="term" value="C:plasma membrane"/>
    <property type="evidence" value="ECO:0007669"/>
    <property type="project" value="UniProtKB-SubCell"/>
</dbReference>
<dbReference type="HAMAP" id="MF_00672">
    <property type="entry name" value="UPF0761"/>
    <property type="match status" value="1"/>
</dbReference>
<dbReference type="InterPro" id="IPR023679">
    <property type="entry name" value="UPF0761_bac"/>
</dbReference>
<dbReference type="InterPro" id="IPR017039">
    <property type="entry name" value="Virul_fac_BrkB"/>
</dbReference>
<dbReference type="NCBIfam" id="TIGR00765">
    <property type="entry name" value="yihY_not_rbn"/>
    <property type="match status" value="1"/>
</dbReference>
<dbReference type="PANTHER" id="PTHR30213">
    <property type="entry name" value="INNER MEMBRANE PROTEIN YHJD"/>
    <property type="match status" value="1"/>
</dbReference>
<dbReference type="PANTHER" id="PTHR30213:SF0">
    <property type="entry name" value="UPF0761 MEMBRANE PROTEIN YIHY"/>
    <property type="match status" value="1"/>
</dbReference>
<dbReference type="Pfam" id="PF03631">
    <property type="entry name" value="Virul_fac_BrkB"/>
    <property type="match status" value="1"/>
</dbReference>
<evidence type="ECO:0000255" key="1">
    <source>
        <dbReference type="HAMAP-Rule" id="MF_00672"/>
    </source>
</evidence>
<organism>
    <name type="scientific">Azotobacter vinelandii (strain DJ / ATCC BAA-1303)</name>
    <dbReference type="NCBI Taxonomy" id="322710"/>
    <lineage>
        <taxon>Bacteria</taxon>
        <taxon>Pseudomonadati</taxon>
        <taxon>Pseudomonadota</taxon>
        <taxon>Gammaproteobacteria</taxon>
        <taxon>Pseudomonadales</taxon>
        <taxon>Pseudomonadaceae</taxon>
        <taxon>Azotobacter</taxon>
    </lineage>
</organism>
<reference key="1">
    <citation type="journal article" date="2009" name="J. Bacteriol.">
        <title>Genome sequence of Azotobacter vinelandii, an obligate aerobe specialized to support diverse anaerobic metabolic processes.</title>
        <authorList>
            <person name="Setubal J.C."/>
            <person name="Dos Santos P."/>
            <person name="Goldman B.S."/>
            <person name="Ertesvaag H."/>
            <person name="Espin G."/>
            <person name="Rubio L.M."/>
            <person name="Valla S."/>
            <person name="Almeida N.F."/>
            <person name="Balasubramanian D."/>
            <person name="Cromes L."/>
            <person name="Curatti L."/>
            <person name="Du Z."/>
            <person name="Godsy E."/>
            <person name="Goodner B."/>
            <person name="Hellner-Burris K."/>
            <person name="Hernandez J.A."/>
            <person name="Houmiel K."/>
            <person name="Imperial J."/>
            <person name="Kennedy C."/>
            <person name="Larson T.J."/>
            <person name="Latreille P."/>
            <person name="Ligon L.S."/>
            <person name="Lu J."/>
            <person name="Maerk M."/>
            <person name="Miller N.M."/>
            <person name="Norton S."/>
            <person name="O'Carroll I.P."/>
            <person name="Paulsen I."/>
            <person name="Raulfs E.C."/>
            <person name="Roemer R."/>
            <person name="Rosser J."/>
            <person name="Segura D."/>
            <person name="Slater S."/>
            <person name="Stricklin S.L."/>
            <person name="Studholme D.J."/>
            <person name="Sun J."/>
            <person name="Viana C.J."/>
            <person name="Wallin E."/>
            <person name="Wang B."/>
            <person name="Wheeler C."/>
            <person name="Zhu H."/>
            <person name="Dean D.R."/>
            <person name="Dixon R."/>
            <person name="Wood D."/>
        </authorList>
    </citation>
    <scope>NUCLEOTIDE SEQUENCE [LARGE SCALE GENOMIC DNA]</scope>
    <source>
        <strain>DJ / ATCC BAA-1303</strain>
    </source>
</reference>
<protein>
    <recommendedName>
        <fullName evidence="1">UPF0761 membrane protein Avin_36810</fullName>
    </recommendedName>
</protein>
<name>Y3681_AZOVD</name>
<gene>
    <name type="ordered locus">Avin_36810</name>
</gene>
<feature type="chain" id="PRO_1000212512" description="UPF0761 membrane protein Avin_36810">
    <location>
        <begin position="1"/>
        <end position="408"/>
    </location>
</feature>
<feature type="transmembrane region" description="Helical" evidence="1">
    <location>
        <begin position="33"/>
        <end position="53"/>
    </location>
</feature>
<feature type="transmembrane region" description="Helical" evidence="1">
    <location>
        <begin position="92"/>
        <end position="112"/>
    </location>
</feature>
<feature type="transmembrane region" description="Helical" evidence="1">
    <location>
        <begin position="132"/>
        <end position="152"/>
    </location>
</feature>
<feature type="transmembrane region" description="Helical" evidence="1">
    <location>
        <begin position="174"/>
        <end position="194"/>
    </location>
</feature>
<feature type="transmembrane region" description="Helical" evidence="1">
    <location>
        <begin position="209"/>
        <end position="229"/>
    </location>
</feature>
<feature type="transmembrane region" description="Helical" evidence="1">
    <location>
        <begin position="238"/>
        <end position="258"/>
    </location>
</feature>
<accession>C1DRV2</accession>
<keyword id="KW-0997">Cell inner membrane</keyword>
<keyword id="KW-1003">Cell membrane</keyword>
<keyword id="KW-0472">Membrane</keyword>
<keyword id="KW-0812">Transmembrane</keyword>
<keyword id="KW-1133">Transmembrane helix</keyword>